<protein>
    <recommendedName>
        <fullName evidence="5">Kinesin-like protein KIN-14M</fullName>
    </recommendedName>
</protein>
<organism>
    <name type="scientific">Oryza sativa subsp. japonica</name>
    <name type="common">Rice</name>
    <dbReference type="NCBI Taxonomy" id="39947"/>
    <lineage>
        <taxon>Eukaryota</taxon>
        <taxon>Viridiplantae</taxon>
        <taxon>Streptophyta</taxon>
        <taxon>Embryophyta</taxon>
        <taxon>Tracheophyta</taxon>
        <taxon>Spermatophyta</taxon>
        <taxon>Magnoliopsida</taxon>
        <taxon>Liliopsida</taxon>
        <taxon>Poales</taxon>
        <taxon>Poaceae</taxon>
        <taxon>BOP clade</taxon>
        <taxon>Oryzoideae</taxon>
        <taxon>Oryzeae</taxon>
        <taxon>Oryzinae</taxon>
        <taxon>Oryza</taxon>
        <taxon>Oryza sativa</taxon>
    </lineage>
</organism>
<sequence>MSSAAADRRRAEAGTGSAAAAAAAAGEGDVGRFLAAAERMGLPGFSPSDLDTGPVSSVVTCLLALRDQFVSHDVGGLSCSLPEKVMMQSMEFPRKENDPGTQNSEGRRKIPKNPAMSEPSSPLSQTTLSSISRHAGHSFHDVFQLRQGRYSDLPSSKISEMMKSTSLDNAPTQSLLSVVNVILDELVETKIGEIPYHLACLLRKVILEIERRISTQAEHIRNQNNLMKAREEKYKSRIRVLEALASGTSDQTHVNSNATNGKAHVSPDHAVHQMKMEKDKTEDKKRLAEKDVVLLVKDKEEDVTRLTKDKEDMAKLLKDKEDIIRLMKEKEEMVWMMREKENMVSLNNGRVEDKHQLTDKDVANSAKYRNEIIKLMKEKEDSNDTIMKLNIELEAMKSSYEGTRILLDSKKKEVLQLLMDKESIEYIVSQLKQELAIERSSHQTHIQELETRAFQANNKLEQRIKEMELMLEDSKTRVRDLEELLESRSQIWEQKEIRLNQFIGLQIQNIQDLRLSSVSIRHEILHCQKRWSEEICDLGQSLKVLTNAAENYHATLEENRKLFNEVQELKGNIRVHCRIRPFLPGEDQTSTTIEYVGDNGELILANPAKRGKEGHKLFKFNKVLGPSASQDEVFKEIQPLIRSVLDGYNVCIFAYGQTGSGKTYTMTGPENATEKDWGVNYRALNDLFHISRSRRDTVMYKVSVQMIEIYNEQIHDLLGNSGSEKKLGILNASQPNGLAVPDATMHPVNSSSDVIELMRTGLENRSVGATALNERSSRSHSVVTMHIQGVDLKTGVTLRGALHLVDLAGSERVDRSAATGDRLKEAQHINKSLSALGDVIFSLSQKNAHVPYRNSKLTQVLQNSLGGNAKTLMFVQVNPDVSSYAETLSTLKFADRVSGVELGAAKANKEGKDIKEFKEQLSLLKDKIAKKDEEISRLQLQSHNTPRATAKRADSLLKHSSSSPGISSLGSKIQHRRTASGGRIKIVGSRAGSDVDNFSDISDRHSEAGSMQSVDDIQQSREIMGLSKLSMSEMGHNSVDPELPCFGYDDSEGRLSDISDSGLSMGAETDCSMSSVVELTSLPDQDRVSGTQKEQHMAPSTPKDRLHKVATRASRTTTPKTPQSPTLWPKLRDPPPPRSPISTSTGKVRVTQATSSSRNSSTQKRWT</sequence>
<dbReference type="EMBL" id="AP003613">
    <property type="protein sequence ID" value="BAD53544.1"/>
    <property type="status" value="ALT_SEQ"/>
    <property type="molecule type" value="Genomic_DNA"/>
</dbReference>
<dbReference type="EMBL" id="AP008212">
    <property type="protein sequence ID" value="BAF19763.1"/>
    <property type="status" value="ALT_SEQ"/>
    <property type="molecule type" value="Genomic_DNA"/>
</dbReference>
<dbReference type="EMBL" id="AP014962">
    <property type="protein sequence ID" value="BAS98214.1"/>
    <property type="status" value="ALT_SEQ"/>
    <property type="molecule type" value="Genomic_DNA"/>
</dbReference>
<dbReference type="EMBL" id="CM000143">
    <property type="protein sequence ID" value="EEE65873.1"/>
    <property type="molecule type" value="Genomic_DNA"/>
</dbReference>
<dbReference type="EMBL" id="AK064200">
    <property type="status" value="NOT_ANNOTATED_CDS"/>
    <property type="molecule type" value="mRNA"/>
</dbReference>
<dbReference type="SMR" id="B9FTR1"/>
<dbReference type="FunCoup" id="B9FTR1">
    <property type="interactions" value="9"/>
</dbReference>
<dbReference type="STRING" id="39947.B9FTR1"/>
<dbReference type="PaxDb" id="39947-B9FTR1"/>
<dbReference type="KEGG" id="dosa:Os06g0554700"/>
<dbReference type="eggNOG" id="KOG0239">
    <property type="taxonomic scope" value="Eukaryota"/>
</dbReference>
<dbReference type="InParanoid" id="B9FTR1"/>
<dbReference type="Proteomes" id="UP000000763">
    <property type="component" value="Chromosome 6"/>
</dbReference>
<dbReference type="Proteomes" id="UP000007752">
    <property type="component" value="Chromosome 6"/>
</dbReference>
<dbReference type="Proteomes" id="UP000059680">
    <property type="component" value="Chromosome 6"/>
</dbReference>
<dbReference type="GO" id="GO:0005874">
    <property type="term" value="C:microtubule"/>
    <property type="evidence" value="ECO:0007669"/>
    <property type="project" value="UniProtKB-KW"/>
</dbReference>
<dbReference type="GO" id="GO:0015630">
    <property type="term" value="C:microtubule cytoskeleton"/>
    <property type="evidence" value="ECO:0000318"/>
    <property type="project" value="GO_Central"/>
</dbReference>
<dbReference type="GO" id="GO:0005524">
    <property type="term" value="F:ATP binding"/>
    <property type="evidence" value="ECO:0007669"/>
    <property type="project" value="UniProtKB-KW"/>
</dbReference>
<dbReference type="GO" id="GO:0008017">
    <property type="term" value="F:microtubule binding"/>
    <property type="evidence" value="ECO:0000318"/>
    <property type="project" value="GO_Central"/>
</dbReference>
<dbReference type="GO" id="GO:0003777">
    <property type="term" value="F:microtubule motor activity"/>
    <property type="evidence" value="ECO:0007669"/>
    <property type="project" value="InterPro"/>
</dbReference>
<dbReference type="GO" id="GO:0007018">
    <property type="term" value="P:microtubule-based movement"/>
    <property type="evidence" value="ECO:0007669"/>
    <property type="project" value="InterPro"/>
</dbReference>
<dbReference type="GO" id="GO:0007017">
    <property type="term" value="P:microtubule-based process"/>
    <property type="evidence" value="ECO:0000318"/>
    <property type="project" value="GO_Central"/>
</dbReference>
<dbReference type="FunFam" id="3.40.850.10:FF:000044">
    <property type="entry name" value="p-loop containing nucleoside triphosphate hydrolases superfamily protein"/>
    <property type="match status" value="1"/>
</dbReference>
<dbReference type="Gene3D" id="3.40.850.10">
    <property type="entry name" value="Kinesin motor domain"/>
    <property type="match status" value="1"/>
</dbReference>
<dbReference type="InterPro" id="IPR027640">
    <property type="entry name" value="Kinesin-like_fam"/>
</dbReference>
<dbReference type="InterPro" id="IPR001752">
    <property type="entry name" value="Kinesin_motor_dom"/>
</dbReference>
<dbReference type="InterPro" id="IPR036961">
    <property type="entry name" value="Kinesin_motor_dom_sf"/>
</dbReference>
<dbReference type="InterPro" id="IPR027417">
    <property type="entry name" value="P-loop_NTPase"/>
</dbReference>
<dbReference type="PANTHER" id="PTHR47972:SF49">
    <property type="entry name" value="KINESIN-LIKE PROTEIN KIN-14M"/>
    <property type="match status" value="1"/>
</dbReference>
<dbReference type="PANTHER" id="PTHR47972">
    <property type="entry name" value="KINESIN-LIKE PROTEIN KLP-3"/>
    <property type="match status" value="1"/>
</dbReference>
<dbReference type="Pfam" id="PF00225">
    <property type="entry name" value="Kinesin"/>
    <property type="match status" value="1"/>
</dbReference>
<dbReference type="PRINTS" id="PR00380">
    <property type="entry name" value="KINESINHEAVY"/>
</dbReference>
<dbReference type="SMART" id="SM00129">
    <property type="entry name" value="KISc"/>
    <property type="match status" value="1"/>
</dbReference>
<dbReference type="SUPFAM" id="SSF52540">
    <property type="entry name" value="P-loop containing nucleoside triphosphate hydrolases"/>
    <property type="match status" value="1"/>
</dbReference>
<dbReference type="PROSITE" id="PS50067">
    <property type="entry name" value="KINESIN_MOTOR_2"/>
    <property type="match status" value="1"/>
</dbReference>
<evidence type="ECO:0000255" key="1"/>
<evidence type="ECO:0000255" key="2">
    <source>
        <dbReference type="PROSITE-ProRule" id="PRU00283"/>
    </source>
</evidence>
<evidence type="ECO:0000256" key="3">
    <source>
        <dbReference type="SAM" id="MobiDB-lite"/>
    </source>
</evidence>
<evidence type="ECO:0000303" key="4">
    <source>
    </source>
</evidence>
<evidence type="ECO:0000305" key="5"/>
<evidence type="ECO:0000312" key="6">
    <source>
        <dbReference type="EMBL" id="BAD53544.1"/>
    </source>
</evidence>
<evidence type="ECO:0000312" key="7">
    <source>
        <dbReference type="EMBL" id="BAS98214.1"/>
    </source>
</evidence>
<evidence type="ECO:0000312" key="8">
    <source>
        <dbReference type="EMBL" id="EEE65873.1"/>
    </source>
</evidence>
<accession>B9FTR1</accession>
<accession>Q0DBL0</accession>
<accession>Q5Z9S9</accession>
<keyword id="KW-0025">Alternative splicing</keyword>
<keyword id="KW-0067">ATP-binding</keyword>
<keyword id="KW-0175">Coiled coil</keyword>
<keyword id="KW-0493">Microtubule</keyword>
<keyword id="KW-0505">Motor protein</keyword>
<keyword id="KW-0547">Nucleotide-binding</keyword>
<keyword id="KW-1185">Reference proteome</keyword>
<name>KN14M_ORYSJ</name>
<gene>
    <name evidence="5" type="primary">KIN14M</name>
    <name evidence="7" type="ordered locus">Os06g0554700</name>
    <name evidence="5" type="ordered locus">LOC_Os06g36080</name>
    <name evidence="8" type="ORF">OsJ_21674</name>
    <name evidence="6" type="ORF">P0458E11.2</name>
</gene>
<proteinExistence type="evidence at transcript level"/>
<comment type="alternative products">
    <event type="alternative splicing"/>
    <isoform>
        <id>B9FTR1-1</id>
        <name>1</name>
        <sequence type="displayed"/>
    </isoform>
    <isoform>
        <id>B9FTR1-2</id>
        <name>2</name>
        <sequence type="described" ref="VSP_058692"/>
    </isoform>
</comment>
<comment type="miscellaneous">
    <molecule>Isoform 2</molecule>
    <text evidence="5">Incomplete sequence.</text>
</comment>
<comment type="similarity">
    <text evidence="4">Belongs to the TRAFAC class myosin-kinesin ATPase superfamily. Kinesin family. KIN-14 subfamily.</text>
</comment>
<comment type="sequence caution" evidence="5">
    <conflict type="erroneous gene model prediction">
        <sequence resource="EMBL-CDS" id="BAD53544"/>
    </conflict>
</comment>
<comment type="sequence caution" evidence="5">
    <conflict type="erroneous gene model prediction">
        <sequence resource="EMBL-CDS" id="BAF19763"/>
    </conflict>
</comment>
<comment type="sequence caution" evidence="5">
    <conflict type="erroneous gene model prediction">
        <sequence resource="EMBL-CDS" id="BAS98214"/>
    </conflict>
</comment>
<feature type="chain" id="PRO_0000438638" description="Kinesin-like protein KIN-14M">
    <location>
        <begin position="1"/>
        <end position="1167"/>
    </location>
</feature>
<feature type="domain" description="Kinesin motor" evidence="2">
    <location>
        <begin position="572"/>
        <end position="900"/>
    </location>
</feature>
<feature type="region of interest" description="Disordered" evidence="3">
    <location>
        <begin position="93"/>
        <end position="130"/>
    </location>
</feature>
<feature type="region of interest" description="Disordered" evidence="3">
    <location>
        <begin position="955"/>
        <end position="974"/>
    </location>
</feature>
<feature type="region of interest" description="Disordered" evidence="3">
    <location>
        <begin position="1083"/>
        <end position="1167"/>
    </location>
</feature>
<feature type="coiled-coil region" evidence="1">
    <location>
        <begin position="271"/>
        <end position="333"/>
    </location>
</feature>
<feature type="coiled-coil region" evidence="1">
    <location>
        <begin position="366"/>
        <end position="398"/>
    </location>
</feature>
<feature type="coiled-coil region" evidence="1">
    <location>
        <begin position="432"/>
        <end position="489"/>
    </location>
</feature>
<feature type="coiled-coil region" evidence="1">
    <location>
        <begin position="907"/>
        <end position="944"/>
    </location>
</feature>
<feature type="compositionally biased region" description="Low complexity" evidence="3">
    <location>
        <begin position="117"/>
        <end position="130"/>
    </location>
</feature>
<feature type="compositionally biased region" description="Low complexity" evidence="3">
    <location>
        <begin position="958"/>
        <end position="972"/>
    </location>
</feature>
<feature type="compositionally biased region" description="Polar residues" evidence="3">
    <location>
        <begin position="1113"/>
        <end position="1124"/>
    </location>
</feature>
<feature type="compositionally biased region" description="Polar residues" evidence="3">
    <location>
        <begin position="1151"/>
        <end position="1167"/>
    </location>
</feature>
<feature type="binding site" evidence="2">
    <location>
        <begin position="656"/>
        <end position="663"/>
    </location>
    <ligand>
        <name>ATP</name>
        <dbReference type="ChEBI" id="CHEBI:30616"/>
    </ligand>
</feature>
<feature type="splice variant" id="VSP_058692" description="In isoform 2.">
    <location>
        <begin position="789"/>
        <end position="819"/>
    </location>
</feature>
<reference key="1">
    <citation type="journal article" date="2005" name="Nature">
        <title>The map-based sequence of the rice genome.</title>
        <authorList>
            <consortium name="International rice genome sequencing project (IRGSP)"/>
        </authorList>
    </citation>
    <scope>NUCLEOTIDE SEQUENCE [LARGE SCALE GENOMIC DNA]</scope>
    <source>
        <strain>cv. Nipponbare</strain>
    </source>
</reference>
<reference key="2">
    <citation type="journal article" date="2008" name="Nucleic Acids Res.">
        <title>The rice annotation project database (RAP-DB): 2008 update.</title>
        <authorList>
            <consortium name="The rice annotation project (RAP)"/>
        </authorList>
    </citation>
    <scope>GENOME REANNOTATION</scope>
    <source>
        <strain>cv. Nipponbare</strain>
    </source>
</reference>
<reference key="3">
    <citation type="journal article" date="2013" name="Rice">
        <title>Improvement of the Oryza sativa Nipponbare reference genome using next generation sequence and optical map data.</title>
        <authorList>
            <person name="Kawahara Y."/>
            <person name="de la Bastide M."/>
            <person name="Hamilton J.P."/>
            <person name="Kanamori H."/>
            <person name="McCombie W.R."/>
            <person name="Ouyang S."/>
            <person name="Schwartz D.C."/>
            <person name="Tanaka T."/>
            <person name="Wu J."/>
            <person name="Zhou S."/>
            <person name="Childs K.L."/>
            <person name="Davidson R.M."/>
            <person name="Lin H."/>
            <person name="Quesada-Ocampo L."/>
            <person name="Vaillancourt B."/>
            <person name="Sakai H."/>
            <person name="Lee S.S."/>
            <person name="Kim J."/>
            <person name="Numa H."/>
            <person name="Itoh T."/>
            <person name="Buell C.R."/>
            <person name="Matsumoto T."/>
        </authorList>
    </citation>
    <scope>GENOME REANNOTATION</scope>
    <source>
        <strain>cv. Nipponbare</strain>
    </source>
</reference>
<reference key="4">
    <citation type="journal article" date="2005" name="PLoS Biol.">
        <title>The genomes of Oryza sativa: a history of duplications.</title>
        <authorList>
            <person name="Yu J."/>
            <person name="Wang J."/>
            <person name="Lin W."/>
            <person name="Li S."/>
            <person name="Li H."/>
            <person name="Zhou J."/>
            <person name="Ni P."/>
            <person name="Dong W."/>
            <person name="Hu S."/>
            <person name="Zeng C."/>
            <person name="Zhang J."/>
            <person name="Zhang Y."/>
            <person name="Li R."/>
            <person name="Xu Z."/>
            <person name="Li S."/>
            <person name="Li X."/>
            <person name="Zheng H."/>
            <person name="Cong L."/>
            <person name="Lin L."/>
            <person name="Yin J."/>
            <person name="Geng J."/>
            <person name="Li G."/>
            <person name="Shi J."/>
            <person name="Liu J."/>
            <person name="Lv H."/>
            <person name="Li J."/>
            <person name="Wang J."/>
            <person name="Deng Y."/>
            <person name="Ran L."/>
            <person name="Shi X."/>
            <person name="Wang X."/>
            <person name="Wu Q."/>
            <person name="Li C."/>
            <person name="Ren X."/>
            <person name="Wang J."/>
            <person name="Wang X."/>
            <person name="Li D."/>
            <person name="Liu D."/>
            <person name="Zhang X."/>
            <person name="Ji Z."/>
            <person name="Zhao W."/>
            <person name="Sun Y."/>
            <person name="Zhang Z."/>
            <person name="Bao J."/>
            <person name="Han Y."/>
            <person name="Dong L."/>
            <person name="Ji J."/>
            <person name="Chen P."/>
            <person name="Wu S."/>
            <person name="Liu J."/>
            <person name="Xiao Y."/>
            <person name="Bu D."/>
            <person name="Tan J."/>
            <person name="Yang L."/>
            <person name="Ye C."/>
            <person name="Zhang J."/>
            <person name="Xu J."/>
            <person name="Zhou Y."/>
            <person name="Yu Y."/>
            <person name="Zhang B."/>
            <person name="Zhuang S."/>
            <person name="Wei H."/>
            <person name="Liu B."/>
            <person name="Lei M."/>
            <person name="Yu H."/>
            <person name="Li Y."/>
            <person name="Xu H."/>
            <person name="Wei S."/>
            <person name="He X."/>
            <person name="Fang L."/>
            <person name="Zhang Z."/>
            <person name="Zhang Y."/>
            <person name="Huang X."/>
            <person name="Su Z."/>
            <person name="Tong W."/>
            <person name="Li J."/>
            <person name="Tong Z."/>
            <person name="Li S."/>
            <person name="Ye J."/>
            <person name="Wang L."/>
            <person name="Fang L."/>
            <person name="Lei T."/>
            <person name="Chen C.-S."/>
            <person name="Chen H.-C."/>
            <person name="Xu Z."/>
            <person name="Li H."/>
            <person name="Huang H."/>
            <person name="Zhang F."/>
            <person name="Xu H."/>
            <person name="Li N."/>
            <person name="Zhao C."/>
            <person name="Li S."/>
            <person name="Dong L."/>
            <person name="Huang Y."/>
            <person name="Li L."/>
            <person name="Xi Y."/>
            <person name="Qi Q."/>
            <person name="Li W."/>
            <person name="Zhang B."/>
            <person name="Hu W."/>
            <person name="Zhang Y."/>
            <person name="Tian X."/>
            <person name="Jiao Y."/>
            <person name="Liang X."/>
            <person name="Jin J."/>
            <person name="Gao L."/>
            <person name="Zheng W."/>
            <person name="Hao B."/>
            <person name="Liu S.-M."/>
            <person name="Wang W."/>
            <person name="Yuan L."/>
            <person name="Cao M."/>
            <person name="McDermott J."/>
            <person name="Samudrala R."/>
            <person name="Wang J."/>
            <person name="Wong G.K.-S."/>
            <person name="Yang H."/>
        </authorList>
    </citation>
    <scope>NUCLEOTIDE SEQUENCE [LARGE SCALE GENOMIC DNA]</scope>
    <source>
        <strain>cv. Nipponbare</strain>
    </source>
</reference>
<reference key="5">
    <citation type="journal article" date="2003" name="Science">
        <title>Collection, mapping, and annotation of over 28,000 cDNA clones from japonica rice.</title>
        <authorList>
            <consortium name="The rice full-length cDNA consortium"/>
        </authorList>
    </citation>
    <scope>NUCLEOTIDE SEQUENCE [LARGE SCALE MRNA] (ISOFORM 2)</scope>
    <source>
        <strain>cv. Nipponbare</strain>
    </source>
</reference>
<reference key="6">
    <citation type="journal article" date="2009" name="Ann. Bot.">
        <title>Evaluating the microtubule cytoskeleton and its interacting proteins in monocots by mining the rice genome.</title>
        <authorList>
            <person name="Guo L."/>
            <person name="Ho C.M."/>
            <person name="Kong Z."/>
            <person name="Lee Y.R."/>
            <person name="Qian Q."/>
            <person name="Liu B."/>
        </authorList>
    </citation>
    <scope>GENE FAMILY</scope>
    <scope>NOMENCLATURE</scope>
</reference>